<evidence type="ECO:0000255" key="1">
    <source>
        <dbReference type="HAMAP-Rule" id="MF_01547"/>
    </source>
</evidence>
<gene>
    <name evidence="1" type="primary">rlmE</name>
    <name evidence="1" type="synonym">ftsJ</name>
    <name evidence="1" type="synonym">rrmJ</name>
    <name type="ordered locus">Bpet3532</name>
</gene>
<dbReference type="EC" id="2.1.1.166" evidence="1"/>
<dbReference type="EMBL" id="AM902716">
    <property type="protein sequence ID" value="CAP43875.1"/>
    <property type="molecule type" value="Genomic_DNA"/>
</dbReference>
<dbReference type="SMR" id="A9HYV0"/>
<dbReference type="STRING" id="94624.Bpet3532"/>
<dbReference type="KEGG" id="bpt:Bpet3532"/>
<dbReference type="eggNOG" id="COG0293">
    <property type="taxonomic scope" value="Bacteria"/>
</dbReference>
<dbReference type="Proteomes" id="UP000001225">
    <property type="component" value="Chromosome"/>
</dbReference>
<dbReference type="GO" id="GO:0005737">
    <property type="term" value="C:cytoplasm"/>
    <property type="evidence" value="ECO:0007669"/>
    <property type="project" value="UniProtKB-SubCell"/>
</dbReference>
<dbReference type="GO" id="GO:0008650">
    <property type="term" value="F:rRNA (uridine-2'-O-)-methyltransferase activity"/>
    <property type="evidence" value="ECO:0007669"/>
    <property type="project" value="UniProtKB-UniRule"/>
</dbReference>
<dbReference type="FunFam" id="3.40.50.150:FF:000005">
    <property type="entry name" value="Ribosomal RNA large subunit methyltransferase E"/>
    <property type="match status" value="1"/>
</dbReference>
<dbReference type="Gene3D" id="3.40.50.150">
    <property type="entry name" value="Vaccinia Virus protein VP39"/>
    <property type="match status" value="1"/>
</dbReference>
<dbReference type="HAMAP" id="MF_01547">
    <property type="entry name" value="RNA_methyltr_E"/>
    <property type="match status" value="1"/>
</dbReference>
<dbReference type="InterPro" id="IPR050082">
    <property type="entry name" value="RNA_methyltr_RlmE"/>
</dbReference>
<dbReference type="InterPro" id="IPR002877">
    <property type="entry name" value="RNA_MeTrfase_FtsJ_dom"/>
</dbReference>
<dbReference type="InterPro" id="IPR015507">
    <property type="entry name" value="rRNA-MeTfrase_E"/>
</dbReference>
<dbReference type="InterPro" id="IPR029063">
    <property type="entry name" value="SAM-dependent_MTases_sf"/>
</dbReference>
<dbReference type="PANTHER" id="PTHR10920">
    <property type="entry name" value="RIBOSOMAL RNA METHYLTRANSFERASE"/>
    <property type="match status" value="1"/>
</dbReference>
<dbReference type="PANTHER" id="PTHR10920:SF18">
    <property type="entry name" value="RRNA METHYLTRANSFERASE 2, MITOCHONDRIAL"/>
    <property type="match status" value="1"/>
</dbReference>
<dbReference type="Pfam" id="PF01728">
    <property type="entry name" value="FtsJ"/>
    <property type="match status" value="1"/>
</dbReference>
<dbReference type="PIRSF" id="PIRSF005461">
    <property type="entry name" value="23S_rRNA_mtase"/>
    <property type="match status" value="1"/>
</dbReference>
<dbReference type="SUPFAM" id="SSF53335">
    <property type="entry name" value="S-adenosyl-L-methionine-dependent methyltransferases"/>
    <property type="match status" value="1"/>
</dbReference>
<keyword id="KW-0963">Cytoplasm</keyword>
<keyword id="KW-0489">Methyltransferase</keyword>
<keyword id="KW-0698">rRNA processing</keyword>
<keyword id="KW-0949">S-adenosyl-L-methionine</keyword>
<keyword id="KW-0808">Transferase</keyword>
<accession>A9HYV0</accession>
<reference key="1">
    <citation type="journal article" date="2008" name="BMC Genomics">
        <title>The missing link: Bordetella petrii is endowed with both the metabolic versatility of environmental bacteria and virulence traits of pathogenic Bordetellae.</title>
        <authorList>
            <person name="Gross R."/>
            <person name="Guzman C.A."/>
            <person name="Sebaihia M."/>
            <person name="Martin dos Santos V.A.P."/>
            <person name="Pieper D.H."/>
            <person name="Koebnik R."/>
            <person name="Lechner M."/>
            <person name="Bartels D."/>
            <person name="Buhrmester J."/>
            <person name="Choudhuri J.V."/>
            <person name="Ebensen T."/>
            <person name="Gaigalat L."/>
            <person name="Herrmann S."/>
            <person name="Khachane A.N."/>
            <person name="Larisch C."/>
            <person name="Link S."/>
            <person name="Linke B."/>
            <person name="Meyer F."/>
            <person name="Mormann S."/>
            <person name="Nakunst D."/>
            <person name="Rueckert C."/>
            <person name="Schneiker-Bekel S."/>
            <person name="Schulze K."/>
            <person name="Voerholter F.-J."/>
            <person name="Yevsa T."/>
            <person name="Engle J.T."/>
            <person name="Goldman W.E."/>
            <person name="Puehler A."/>
            <person name="Goebel U.B."/>
            <person name="Goesmann A."/>
            <person name="Bloecker H."/>
            <person name="Kaiser O."/>
            <person name="Martinez-Arias R."/>
        </authorList>
    </citation>
    <scope>NUCLEOTIDE SEQUENCE [LARGE SCALE GENOMIC DNA]</scope>
    <source>
        <strain>ATCC BAA-461 / DSM 12804 / CCUG 43448</strain>
    </source>
</reference>
<protein>
    <recommendedName>
        <fullName evidence="1">Ribosomal RNA large subunit methyltransferase E</fullName>
        <ecNumber evidence="1">2.1.1.166</ecNumber>
    </recommendedName>
    <alternativeName>
        <fullName evidence="1">23S rRNA Um2552 methyltransferase</fullName>
    </alternativeName>
    <alternativeName>
        <fullName evidence="1">rRNA (uridine-2'-O-)-methyltransferase</fullName>
    </alternativeName>
</protein>
<sequence length="211" mass="23282">MAKKKFSKDWIHQHINDPYVKMAQQKGYRARAAFKLIEILDTEKLMRRGDIVVDLGSAPGSWSQVARERLAGPGGVVDGRIIALDLLPMEPVAGVEFIQGDFRDEAVLQQLQEMVGGQPVSLVISDMAPNLSGVGVADSARIQHVCELALDFACNHLKPDGALIVKAFHGSGFSQIVQSFKQRFKRVVERKPKASRDKSSETFLVARDLKS</sequence>
<comment type="function">
    <text evidence="1">Specifically methylates the uridine in position 2552 of 23S rRNA at the 2'-O position of the ribose in the fully assembled 50S ribosomal subunit.</text>
</comment>
<comment type="catalytic activity">
    <reaction evidence="1">
        <text>uridine(2552) in 23S rRNA + S-adenosyl-L-methionine = 2'-O-methyluridine(2552) in 23S rRNA + S-adenosyl-L-homocysteine + H(+)</text>
        <dbReference type="Rhea" id="RHEA:42720"/>
        <dbReference type="Rhea" id="RHEA-COMP:10202"/>
        <dbReference type="Rhea" id="RHEA-COMP:10203"/>
        <dbReference type="ChEBI" id="CHEBI:15378"/>
        <dbReference type="ChEBI" id="CHEBI:57856"/>
        <dbReference type="ChEBI" id="CHEBI:59789"/>
        <dbReference type="ChEBI" id="CHEBI:65315"/>
        <dbReference type="ChEBI" id="CHEBI:74478"/>
        <dbReference type="EC" id="2.1.1.166"/>
    </reaction>
</comment>
<comment type="subcellular location">
    <subcellularLocation>
        <location evidence="1">Cytoplasm</location>
    </subcellularLocation>
</comment>
<comment type="similarity">
    <text evidence="1">Belongs to the class I-like SAM-binding methyltransferase superfamily. RNA methyltransferase RlmE family.</text>
</comment>
<organism>
    <name type="scientific">Bordetella petrii (strain ATCC BAA-461 / DSM 12804 / CCUG 43448)</name>
    <dbReference type="NCBI Taxonomy" id="340100"/>
    <lineage>
        <taxon>Bacteria</taxon>
        <taxon>Pseudomonadati</taxon>
        <taxon>Pseudomonadota</taxon>
        <taxon>Betaproteobacteria</taxon>
        <taxon>Burkholderiales</taxon>
        <taxon>Alcaligenaceae</taxon>
        <taxon>Bordetella</taxon>
    </lineage>
</organism>
<name>RLME_BORPD</name>
<feature type="chain" id="PRO_1000194976" description="Ribosomal RNA large subunit methyltransferase E">
    <location>
        <begin position="1"/>
        <end position="211"/>
    </location>
</feature>
<feature type="active site" description="Proton acceptor" evidence="1">
    <location>
        <position position="166"/>
    </location>
</feature>
<feature type="binding site" evidence="1">
    <location>
        <position position="60"/>
    </location>
    <ligand>
        <name>S-adenosyl-L-methionine</name>
        <dbReference type="ChEBI" id="CHEBI:59789"/>
    </ligand>
</feature>
<feature type="binding site" evidence="1">
    <location>
        <position position="62"/>
    </location>
    <ligand>
        <name>S-adenosyl-L-methionine</name>
        <dbReference type="ChEBI" id="CHEBI:59789"/>
    </ligand>
</feature>
<feature type="binding site" evidence="1">
    <location>
        <position position="85"/>
    </location>
    <ligand>
        <name>S-adenosyl-L-methionine</name>
        <dbReference type="ChEBI" id="CHEBI:59789"/>
    </ligand>
</feature>
<feature type="binding site" evidence="1">
    <location>
        <position position="101"/>
    </location>
    <ligand>
        <name>S-adenosyl-L-methionine</name>
        <dbReference type="ChEBI" id="CHEBI:59789"/>
    </ligand>
</feature>
<feature type="binding site" evidence="1">
    <location>
        <position position="126"/>
    </location>
    <ligand>
        <name>S-adenosyl-L-methionine</name>
        <dbReference type="ChEBI" id="CHEBI:59789"/>
    </ligand>
</feature>
<proteinExistence type="inferred from homology"/>